<proteinExistence type="inferred from homology"/>
<gene>
    <name type="primary">nodD1</name>
    <name type="ordered locus">NGR_a00360</name>
    <name type="ORF">y4aL</name>
</gene>
<organism>
    <name type="scientific">Sinorhizobium fredii (strain NBRC 101917 / NGR234)</name>
    <dbReference type="NCBI Taxonomy" id="394"/>
    <lineage>
        <taxon>Bacteria</taxon>
        <taxon>Pseudomonadati</taxon>
        <taxon>Pseudomonadota</taxon>
        <taxon>Alphaproteobacteria</taxon>
        <taxon>Hyphomicrobiales</taxon>
        <taxon>Rhizobiaceae</taxon>
        <taxon>Sinorhizobium/Ensifer group</taxon>
        <taxon>Sinorhizobium</taxon>
    </lineage>
</organism>
<name>NODD1_SINFN</name>
<evidence type="ECO:0000255" key="1">
    <source>
        <dbReference type="PROSITE-ProRule" id="PRU00253"/>
    </source>
</evidence>
<evidence type="ECO:0000305" key="2"/>
<sequence>MRFKGLDLNLLVALDALMTERKLTAAARSINLSQPAMSAAITRLRTYFRDELFTMNGRELVPTPRAEALAPAVREALLHIHLSIISWDPFNPAQSDRSFRIILSDFMTLMFLERVVVRVAREAPAVSFELLPFSDEPDELLRRGDVDFLILPEMFMSHTHPRAKLFDERFVCVSCPTNQKLPPQLSIDNYVSMGHVAAQFGKQRPSVEEWLLREHGLRRRVEVAVPGFTMIPSFLSGTDRIATLPLRLAMHFAKAIPLRITELPQPIFPAFTEAVQWPAPHSSDPASLWMREIFLQEASRVEFQSETSAHALSKADGAIRHP</sequence>
<reference key="1">
    <citation type="journal article" date="1997" name="Nature">
        <title>Molecular basis of symbiosis between Rhizobium and legumes.</title>
        <authorList>
            <person name="Freiberg C.A."/>
            <person name="Fellay R."/>
            <person name="Bairoch A."/>
            <person name="Broughton W.J."/>
            <person name="Rosenthal A."/>
            <person name="Perret X."/>
        </authorList>
    </citation>
    <scope>NUCLEOTIDE SEQUENCE [LARGE SCALE GENOMIC DNA]</scope>
    <source>
        <strain>NBRC 101917 / NGR234</strain>
    </source>
</reference>
<reference key="2">
    <citation type="journal article" date="2009" name="Appl. Environ. Microbiol.">
        <title>Rhizobium sp. strain NGR234 possesses a remarkable number of secretion systems.</title>
        <authorList>
            <person name="Schmeisser C."/>
            <person name="Liesegang H."/>
            <person name="Krysciak D."/>
            <person name="Bakkou N."/>
            <person name="Le Quere A."/>
            <person name="Wollherr A."/>
            <person name="Heinemeyer I."/>
            <person name="Morgenstern B."/>
            <person name="Pommerening-Roeser A."/>
            <person name="Flores M."/>
            <person name="Palacios R."/>
            <person name="Brenner S."/>
            <person name="Gottschalk G."/>
            <person name="Schmitz R.A."/>
            <person name="Broughton W.J."/>
            <person name="Perret X."/>
            <person name="Strittmatter A.W."/>
            <person name="Streit W.R."/>
        </authorList>
    </citation>
    <scope>NUCLEOTIDE SEQUENCE [LARGE SCALE GENOMIC DNA]</scope>
    <source>
        <strain>NBRC 101917 / NGR234</strain>
    </source>
</reference>
<protein>
    <recommendedName>
        <fullName>Nodulation protein D 1</fullName>
    </recommendedName>
</protein>
<keyword id="KW-0010">Activator</keyword>
<keyword id="KW-0238">DNA-binding</keyword>
<keyword id="KW-0536">Nodulation</keyword>
<keyword id="KW-0614">Plasmid</keyword>
<keyword id="KW-1185">Reference proteome</keyword>
<keyword id="KW-0678">Repressor</keyword>
<keyword id="KW-0804">Transcription</keyword>
<keyword id="KW-0805">Transcription regulation</keyword>
<dbReference type="EMBL" id="U00090">
    <property type="protein sequence ID" value="AAB91609.1"/>
    <property type="molecule type" value="Genomic_DNA"/>
</dbReference>
<dbReference type="RefSeq" id="NP_443771.1">
    <property type="nucleotide sequence ID" value="NC_000914.2"/>
</dbReference>
<dbReference type="RefSeq" id="WP_010875078.1">
    <property type="nucleotide sequence ID" value="NC_000914.2"/>
</dbReference>
<dbReference type="SMR" id="P55359"/>
<dbReference type="KEGG" id="rhi:NGR_a00360"/>
<dbReference type="eggNOG" id="COG0583">
    <property type="taxonomic scope" value="Bacteria"/>
</dbReference>
<dbReference type="HOGENOM" id="CLU_039613_39_0_5"/>
<dbReference type="OrthoDB" id="8339333at2"/>
<dbReference type="Proteomes" id="UP000001054">
    <property type="component" value="Plasmid pNGR234a"/>
</dbReference>
<dbReference type="GO" id="GO:0003677">
    <property type="term" value="F:DNA binding"/>
    <property type="evidence" value="ECO:0007669"/>
    <property type="project" value="UniProtKB-KW"/>
</dbReference>
<dbReference type="GO" id="GO:0003700">
    <property type="term" value="F:DNA-binding transcription factor activity"/>
    <property type="evidence" value="ECO:0007669"/>
    <property type="project" value="InterPro"/>
</dbReference>
<dbReference type="CDD" id="cd08462">
    <property type="entry name" value="PBP2_NodD"/>
    <property type="match status" value="1"/>
</dbReference>
<dbReference type="Gene3D" id="3.40.190.10">
    <property type="entry name" value="Periplasmic binding protein-like II"/>
    <property type="match status" value="2"/>
</dbReference>
<dbReference type="Gene3D" id="1.10.10.10">
    <property type="entry name" value="Winged helix-like DNA-binding domain superfamily/Winged helix DNA-binding domain"/>
    <property type="match status" value="1"/>
</dbReference>
<dbReference type="InterPro" id="IPR050389">
    <property type="entry name" value="LysR-type_TF"/>
</dbReference>
<dbReference type="InterPro" id="IPR005119">
    <property type="entry name" value="LysR_subst-bd"/>
</dbReference>
<dbReference type="InterPro" id="IPR037416">
    <property type="entry name" value="NodD_PBP2"/>
</dbReference>
<dbReference type="InterPro" id="IPR000847">
    <property type="entry name" value="Tscrpt_reg_HTH_LysR"/>
</dbReference>
<dbReference type="InterPro" id="IPR036388">
    <property type="entry name" value="WH-like_DNA-bd_sf"/>
</dbReference>
<dbReference type="InterPro" id="IPR036390">
    <property type="entry name" value="WH_DNA-bd_sf"/>
</dbReference>
<dbReference type="PANTHER" id="PTHR30118:SF6">
    <property type="entry name" value="HTH-TYPE TRANSCRIPTIONAL REGULATOR LEUO"/>
    <property type="match status" value="1"/>
</dbReference>
<dbReference type="PANTHER" id="PTHR30118">
    <property type="entry name" value="HTH-TYPE TRANSCRIPTIONAL REGULATOR LEUO-RELATED"/>
    <property type="match status" value="1"/>
</dbReference>
<dbReference type="Pfam" id="PF00126">
    <property type="entry name" value="HTH_1"/>
    <property type="match status" value="1"/>
</dbReference>
<dbReference type="Pfam" id="PF03466">
    <property type="entry name" value="LysR_substrate"/>
    <property type="match status" value="1"/>
</dbReference>
<dbReference type="PRINTS" id="PR00039">
    <property type="entry name" value="HTHLYSR"/>
</dbReference>
<dbReference type="SUPFAM" id="SSF53850">
    <property type="entry name" value="Periplasmic binding protein-like II"/>
    <property type="match status" value="1"/>
</dbReference>
<dbReference type="SUPFAM" id="SSF46785">
    <property type="entry name" value="Winged helix' DNA-binding domain"/>
    <property type="match status" value="1"/>
</dbReference>
<dbReference type="PROSITE" id="PS50931">
    <property type="entry name" value="HTH_LYSR"/>
    <property type="match status" value="1"/>
</dbReference>
<comment type="function">
    <text>Regulates the expression of the nod abcFE genes which encode other nodulation proteins. NodD is also a negative regulator of its own expression. Binds flavonoids as inducers.</text>
</comment>
<comment type="similarity">
    <text evidence="2">Belongs to the LysR transcriptional regulatory family.</text>
</comment>
<accession>P55359</accession>
<feature type="chain" id="PRO_0000105721" description="Nodulation protein D 1">
    <location>
        <begin position="1"/>
        <end position="322"/>
    </location>
</feature>
<feature type="domain" description="HTH lysR-type" evidence="1">
    <location>
        <begin position="6"/>
        <end position="63"/>
    </location>
</feature>
<feature type="DNA-binding region" description="H-T-H motif" evidence="1">
    <location>
        <begin position="23"/>
        <end position="42"/>
    </location>
</feature>
<geneLocation type="plasmid">
    <name>sym pNGR234a</name>
</geneLocation>